<name>RRP3_YEAST</name>
<comment type="function">
    <text evidence="5 6 7 8">ATP-dependent rRNA helicase required for pre-ribosomal RNA processing. Involved in the maturation of the 35S-pre-rRNA and to its cleavage to mature 18S rRNA.</text>
</comment>
<comment type="catalytic activity">
    <reaction evidence="6 7 8">
        <text>ATP + H2O = ADP + phosphate + H(+)</text>
        <dbReference type="Rhea" id="RHEA:13065"/>
        <dbReference type="ChEBI" id="CHEBI:15377"/>
        <dbReference type="ChEBI" id="CHEBI:15378"/>
        <dbReference type="ChEBI" id="CHEBI:30616"/>
        <dbReference type="ChEBI" id="CHEBI:43474"/>
        <dbReference type="ChEBI" id="CHEBI:456216"/>
        <dbReference type="EC" id="3.6.4.13"/>
    </reaction>
</comment>
<comment type="activity regulation">
    <text evidence="6 7">ATPase activity is stimulated upon the addition of RNA.</text>
</comment>
<comment type="biophysicochemical properties">
    <kinetics>
        <KM evidence="6">2.3 mM for ATP</KM>
    </kinetics>
    <phDependence>
        <text evidence="6">Optimum pH is 7.0-9.0.</text>
    </phDependence>
</comment>
<comment type="subunit">
    <text evidence="5">Interacts with the SSU processome.</text>
</comment>
<comment type="subcellular location">
    <subcellularLocation>
        <location evidence="10">Nucleus</location>
    </subcellularLocation>
</comment>
<comment type="domain">
    <text evidence="10">The Q motif is unique to and characteristic of the DEAD box family of RNA helicases and controls ATP binding and hydrolysis.</text>
</comment>
<comment type="disruption phenotype">
    <text evidence="8">Leads to improper processing of 35S precursor rRNA.</text>
</comment>
<comment type="similarity">
    <text evidence="10">Belongs to the DEAD box helicase family. DDX47/RRP3 subfamily.</text>
</comment>
<comment type="sequence caution" evidence="10">
    <conflict type="erroneous initiation">
        <sequence resource="EMBL-CDS" id="AAB68392"/>
    </conflict>
</comment>
<dbReference type="EC" id="3.6.4.13" evidence="6 7 8"/>
<dbReference type="EMBL" id="U00061">
    <property type="protein sequence ID" value="AAB68392.1"/>
    <property type="status" value="ALT_INIT"/>
    <property type="molecule type" value="Genomic_DNA"/>
</dbReference>
<dbReference type="EMBL" id="AH013309">
    <property type="protein sequence ID" value="AAQ97234.1"/>
    <property type="molecule type" value="mRNA"/>
</dbReference>
<dbReference type="EMBL" id="AH013309">
    <property type="protein sequence ID" value="AAQ97235.1"/>
    <property type="molecule type" value="mRNA"/>
</dbReference>
<dbReference type="EMBL" id="BK006934">
    <property type="protein sequence ID" value="DAA06758.1"/>
    <property type="molecule type" value="Genomic_DNA"/>
</dbReference>
<dbReference type="PIR" id="S46713">
    <property type="entry name" value="S46713"/>
</dbReference>
<dbReference type="RefSeq" id="NP_011932.2">
    <property type="nucleotide sequence ID" value="NM_001179195.1"/>
</dbReference>
<dbReference type="SMR" id="P38712"/>
<dbReference type="BioGRID" id="36497">
    <property type="interactions" value="161"/>
</dbReference>
<dbReference type="DIP" id="DIP-6533N"/>
<dbReference type="FunCoup" id="P38712">
    <property type="interactions" value="1364"/>
</dbReference>
<dbReference type="IntAct" id="P38712">
    <property type="interactions" value="7"/>
</dbReference>
<dbReference type="MINT" id="P38712"/>
<dbReference type="STRING" id="4932.YHR065C"/>
<dbReference type="iPTMnet" id="P38712"/>
<dbReference type="PaxDb" id="4932-YHR065C"/>
<dbReference type="PeptideAtlas" id="P38712"/>
<dbReference type="EnsemblFungi" id="YHR065C_mRNA">
    <property type="protein sequence ID" value="YHR065C"/>
    <property type="gene ID" value="YHR065C"/>
</dbReference>
<dbReference type="GeneID" id="856462"/>
<dbReference type="KEGG" id="sce:YHR065C"/>
<dbReference type="AGR" id="SGD:S000001107"/>
<dbReference type="SGD" id="S000001107">
    <property type="gene designation" value="RRP3"/>
</dbReference>
<dbReference type="VEuPathDB" id="FungiDB:YHR065C"/>
<dbReference type="eggNOG" id="KOG0330">
    <property type="taxonomic scope" value="Eukaryota"/>
</dbReference>
<dbReference type="GeneTree" id="ENSGT00940000155774"/>
<dbReference type="HOGENOM" id="CLU_003041_1_1_1"/>
<dbReference type="InParanoid" id="P38712"/>
<dbReference type="OMA" id="GIGIKCC"/>
<dbReference type="OrthoDB" id="10261904at2759"/>
<dbReference type="BioCyc" id="YEAST:G3O-31116-MONOMER"/>
<dbReference type="Reactome" id="R-SCE-6791226">
    <property type="pathway name" value="Major pathway of rRNA processing in the nucleolus and cytosol"/>
</dbReference>
<dbReference type="BioGRID-ORCS" id="856462">
    <property type="hits" value="5 hits in 10 CRISPR screens"/>
</dbReference>
<dbReference type="CD-CODE" id="BDAE0F88">
    <property type="entry name" value="Nucleolus"/>
</dbReference>
<dbReference type="CD-CODE" id="E03F929F">
    <property type="entry name" value="Stress granule"/>
</dbReference>
<dbReference type="PRO" id="PR:P38712"/>
<dbReference type="Proteomes" id="UP000002311">
    <property type="component" value="Chromosome VIII"/>
</dbReference>
<dbReference type="RNAct" id="P38712">
    <property type="molecule type" value="protein"/>
</dbReference>
<dbReference type="GO" id="GO:0005730">
    <property type="term" value="C:nucleolus"/>
    <property type="evidence" value="ECO:0000314"/>
    <property type="project" value="ComplexPortal"/>
</dbReference>
<dbReference type="GO" id="GO:0005654">
    <property type="term" value="C:nucleoplasm"/>
    <property type="evidence" value="ECO:0000304"/>
    <property type="project" value="Reactome"/>
</dbReference>
<dbReference type="GO" id="GO:0005634">
    <property type="term" value="C:nucleus"/>
    <property type="evidence" value="ECO:0000318"/>
    <property type="project" value="GO_Central"/>
</dbReference>
<dbReference type="GO" id="GO:0032040">
    <property type="term" value="C:small-subunit processome"/>
    <property type="evidence" value="ECO:0000353"/>
    <property type="project" value="ComplexPortal"/>
</dbReference>
<dbReference type="GO" id="GO:0005524">
    <property type="term" value="F:ATP binding"/>
    <property type="evidence" value="ECO:0007669"/>
    <property type="project" value="UniProtKB-KW"/>
</dbReference>
<dbReference type="GO" id="GO:0016887">
    <property type="term" value="F:ATP hydrolysis activity"/>
    <property type="evidence" value="ECO:0007669"/>
    <property type="project" value="RHEA"/>
</dbReference>
<dbReference type="GO" id="GO:0008186">
    <property type="term" value="F:ATP-dependent activity, acting on RNA"/>
    <property type="evidence" value="ECO:0000314"/>
    <property type="project" value="SGD"/>
</dbReference>
<dbReference type="GO" id="GO:0003723">
    <property type="term" value="F:RNA binding"/>
    <property type="evidence" value="ECO:0007669"/>
    <property type="project" value="UniProtKB-KW"/>
</dbReference>
<dbReference type="GO" id="GO:0003724">
    <property type="term" value="F:RNA helicase activity"/>
    <property type="evidence" value="ECO:0000314"/>
    <property type="project" value="SGD"/>
</dbReference>
<dbReference type="GO" id="GO:0030490">
    <property type="term" value="P:maturation of SSU-rRNA"/>
    <property type="evidence" value="ECO:0000303"/>
    <property type="project" value="ComplexPortal"/>
</dbReference>
<dbReference type="GO" id="GO:0000462">
    <property type="term" value="P:maturation of SSU-rRNA from tricistronic rRNA transcript (SSU-rRNA, 5.8S rRNA, LSU-rRNA)"/>
    <property type="evidence" value="ECO:0000315"/>
    <property type="project" value="SGD"/>
</dbReference>
<dbReference type="GO" id="GO:0006364">
    <property type="term" value="P:rRNA processing"/>
    <property type="evidence" value="ECO:0000318"/>
    <property type="project" value="GO_Central"/>
</dbReference>
<dbReference type="CDD" id="cd17954">
    <property type="entry name" value="DEADc_DDX47"/>
    <property type="match status" value="1"/>
</dbReference>
<dbReference type="CDD" id="cd18787">
    <property type="entry name" value="SF2_C_DEAD"/>
    <property type="match status" value="1"/>
</dbReference>
<dbReference type="FunFam" id="3.40.50.300:FF:000626">
    <property type="entry name" value="probable ATP-dependent RNA helicase DDX47"/>
    <property type="match status" value="1"/>
</dbReference>
<dbReference type="FunFam" id="3.40.50.300:FF:000681">
    <property type="entry name" value="probable ATP-dependent RNA helicase DDX47"/>
    <property type="match status" value="1"/>
</dbReference>
<dbReference type="Gene3D" id="3.40.50.300">
    <property type="entry name" value="P-loop containing nucleotide triphosphate hydrolases"/>
    <property type="match status" value="2"/>
</dbReference>
<dbReference type="InterPro" id="IPR044765">
    <property type="entry name" value="DDX47/Rrp3_DEADc"/>
</dbReference>
<dbReference type="InterPro" id="IPR011545">
    <property type="entry name" value="DEAD/DEAH_box_helicase_dom"/>
</dbReference>
<dbReference type="InterPro" id="IPR050079">
    <property type="entry name" value="DEAD_box_RNA_helicase"/>
</dbReference>
<dbReference type="InterPro" id="IPR014001">
    <property type="entry name" value="Helicase_ATP-bd"/>
</dbReference>
<dbReference type="InterPro" id="IPR001650">
    <property type="entry name" value="Helicase_C-like"/>
</dbReference>
<dbReference type="InterPro" id="IPR027417">
    <property type="entry name" value="P-loop_NTPase"/>
</dbReference>
<dbReference type="InterPro" id="IPR000629">
    <property type="entry name" value="RNA-helicase_DEAD-box_CS"/>
</dbReference>
<dbReference type="InterPro" id="IPR014014">
    <property type="entry name" value="RNA_helicase_DEAD_Q_motif"/>
</dbReference>
<dbReference type="PANTHER" id="PTHR47959:SF24">
    <property type="entry name" value="ATP-DEPENDENT RNA HELICASE"/>
    <property type="match status" value="1"/>
</dbReference>
<dbReference type="PANTHER" id="PTHR47959">
    <property type="entry name" value="ATP-DEPENDENT RNA HELICASE RHLE-RELATED"/>
    <property type="match status" value="1"/>
</dbReference>
<dbReference type="Pfam" id="PF00270">
    <property type="entry name" value="DEAD"/>
    <property type="match status" value="1"/>
</dbReference>
<dbReference type="Pfam" id="PF00271">
    <property type="entry name" value="Helicase_C"/>
    <property type="match status" value="1"/>
</dbReference>
<dbReference type="SMART" id="SM00487">
    <property type="entry name" value="DEXDc"/>
    <property type="match status" value="1"/>
</dbReference>
<dbReference type="SMART" id="SM00490">
    <property type="entry name" value="HELICc"/>
    <property type="match status" value="1"/>
</dbReference>
<dbReference type="SUPFAM" id="SSF52540">
    <property type="entry name" value="P-loop containing nucleoside triphosphate hydrolases"/>
    <property type="match status" value="1"/>
</dbReference>
<dbReference type="PROSITE" id="PS00039">
    <property type="entry name" value="DEAD_ATP_HELICASE"/>
    <property type="match status" value="1"/>
</dbReference>
<dbReference type="PROSITE" id="PS51192">
    <property type="entry name" value="HELICASE_ATP_BIND_1"/>
    <property type="match status" value="1"/>
</dbReference>
<dbReference type="PROSITE" id="PS51194">
    <property type="entry name" value="HELICASE_CTER"/>
    <property type="match status" value="1"/>
</dbReference>
<dbReference type="PROSITE" id="PS51195">
    <property type="entry name" value="Q_MOTIF"/>
    <property type="match status" value="1"/>
</dbReference>
<keyword id="KW-0067">ATP-binding</keyword>
<keyword id="KW-0175">Coiled coil</keyword>
<keyword id="KW-0347">Helicase</keyword>
<keyword id="KW-0378">Hydrolase</keyword>
<keyword id="KW-0547">Nucleotide-binding</keyword>
<keyword id="KW-0539">Nucleus</keyword>
<keyword id="KW-0597">Phosphoprotein</keyword>
<keyword id="KW-1185">Reference proteome</keyword>
<keyword id="KW-0690">Ribosome biogenesis</keyword>
<keyword id="KW-0694">RNA-binding</keyword>
<keyword id="KW-0698">rRNA processing</keyword>
<feature type="chain" id="PRO_0000055064" description="ATP-dependent rRNA helicase RRP3">
    <location>
        <begin position="1"/>
        <end position="501"/>
    </location>
</feature>
<feature type="domain" description="Helicase ATP-binding" evidence="2">
    <location>
        <begin position="112"/>
        <end position="284"/>
    </location>
</feature>
<feature type="domain" description="Helicase C-terminal" evidence="3">
    <location>
        <begin position="307"/>
        <end position="461"/>
    </location>
</feature>
<feature type="region of interest" description="Disordered" evidence="4">
    <location>
        <begin position="36"/>
        <end position="79"/>
    </location>
</feature>
<feature type="region of interest" description="Disordered" evidence="4">
    <location>
        <begin position="480"/>
        <end position="501"/>
    </location>
</feature>
<feature type="coiled-coil region" evidence="1">
    <location>
        <begin position="3"/>
        <end position="44"/>
    </location>
</feature>
<feature type="short sequence motif" description="Q motif" evidence="10">
    <location>
        <begin position="81"/>
        <end position="109"/>
    </location>
</feature>
<feature type="short sequence motif" description="DEAD box" evidence="10">
    <location>
        <begin position="231"/>
        <end position="234"/>
    </location>
</feature>
<feature type="compositionally biased region" description="Basic and acidic residues" evidence="4">
    <location>
        <begin position="491"/>
        <end position="501"/>
    </location>
</feature>
<feature type="binding site" evidence="2">
    <location>
        <begin position="125"/>
        <end position="132"/>
    </location>
    <ligand>
        <name>ATP</name>
        <dbReference type="ChEBI" id="CHEBI:30616"/>
    </ligand>
</feature>
<feature type="modified residue" description="Phosphoserine" evidence="12 13">
    <location>
        <position position="43"/>
    </location>
</feature>
<feature type="modified residue" description="Phosphoserine" evidence="12 13">
    <location>
        <position position="45"/>
    </location>
</feature>
<feature type="modified residue" description="Phosphoserine" evidence="12 13">
    <location>
        <position position="47"/>
    </location>
</feature>
<feature type="mutagenesis site" description="Leads to defects in A1 and A2 processing." evidence="5">
    <original>K</original>
    <variation>A</variation>
    <variation>R</variation>
    <location>
        <position position="131"/>
    </location>
</feature>
<feature type="mutagenesis site" description="Leads to defects in A1 and A2 processing." evidence="5">
    <original>D</original>
    <variation>A</variation>
    <location>
        <position position="231"/>
    </location>
</feature>
<feature type="mutagenesis site" description="Leads to defects in A1 and A2 processing." evidence="5">
    <original>S</original>
    <variation>L</variation>
    <location>
        <position position="263"/>
    </location>
</feature>
<sequence>MSKIVKRKEKKANDELTSLAEKIRAKALENQKKLIEAEKEGGSESDSEEDATAEKKKVLKSKSKSTVSTQNENTNEDESFESFSELNLVPELIQACKNLNYSKPTPIQSKAIPPALEGHDIIGLAQTGSGKTAAFAIPILNRLWHDQEPYYACILAPTRELAQQIKETFDSLGSLMGVRSTCIVGGMNMMDQARDLMRKPHIIIATPGRLMDHLENTKGFSLRKLKFLVMDEADRLLDMEFGPVLDRILKIIPTQERTTYLFSATMTSKIDKLQRASLTNPVKCAVSNKYQTVDTLVQTLMVVPGGLKNTYLIYLLNEFIGKTMIIFTRTKANAERLSGLCNLLEFSATALHGDLNQNQRMGSLDLFKAGKRSILVATDVAARGLDIPSVDIVVNYDIPVDSKSYIHRVGRTARAGRSGKSISLVSQYDLELILRIEEVLGKKLPKESVDKNIILTLRDSVDKANGEVVMEMNRRNKEKIARGKGRRGRMMTRENMDMGER</sequence>
<proteinExistence type="evidence at protein level"/>
<organism>
    <name type="scientific">Saccharomyces cerevisiae (strain ATCC 204508 / S288c)</name>
    <name type="common">Baker's yeast</name>
    <dbReference type="NCBI Taxonomy" id="559292"/>
    <lineage>
        <taxon>Eukaryota</taxon>
        <taxon>Fungi</taxon>
        <taxon>Dikarya</taxon>
        <taxon>Ascomycota</taxon>
        <taxon>Saccharomycotina</taxon>
        <taxon>Saccharomycetes</taxon>
        <taxon>Saccharomycetales</taxon>
        <taxon>Saccharomycetaceae</taxon>
        <taxon>Saccharomyces</taxon>
    </lineage>
</organism>
<reference key="1">
    <citation type="journal article" date="1994" name="Science">
        <title>Complete nucleotide sequence of Saccharomyces cerevisiae chromosome VIII.</title>
        <authorList>
            <person name="Johnston M."/>
            <person name="Andrews S."/>
            <person name="Brinkman R."/>
            <person name="Cooper J."/>
            <person name="Ding H."/>
            <person name="Dover J."/>
            <person name="Du Z."/>
            <person name="Favello A."/>
            <person name="Fulton L."/>
            <person name="Gattung S."/>
            <person name="Geisel C."/>
            <person name="Kirsten J."/>
            <person name="Kucaba T."/>
            <person name="Hillier L.W."/>
            <person name="Jier M."/>
            <person name="Johnston L."/>
            <person name="Langston Y."/>
            <person name="Latreille P."/>
            <person name="Louis E.J."/>
            <person name="Macri C."/>
            <person name="Mardis E."/>
            <person name="Menezes S."/>
            <person name="Mouser L."/>
            <person name="Nhan M."/>
            <person name="Rifkin L."/>
            <person name="Riles L."/>
            <person name="St Peter H."/>
            <person name="Trevaskis E."/>
            <person name="Vaughan K."/>
            <person name="Vignati D."/>
            <person name="Wilcox L."/>
            <person name="Wohldman P."/>
            <person name="Waterston R."/>
            <person name="Wilson R."/>
            <person name="Vaudin M."/>
        </authorList>
    </citation>
    <scope>NUCLEOTIDE SEQUENCE [LARGE SCALE GENOMIC DNA]</scope>
    <source>
        <strain>ATCC 204508 / S288c</strain>
    </source>
</reference>
<reference key="2">
    <citation type="journal article" date="2014" name="G3 (Bethesda)">
        <title>The reference genome sequence of Saccharomyces cerevisiae: Then and now.</title>
        <authorList>
            <person name="Engel S.R."/>
            <person name="Dietrich F.S."/>
            <person name="Fisk D.G."/>
            <person name="Binkley G."/>
            <person name="Balakrishnan R."/>
            <person name="Costanzo M.C."/>
            <person name="Dwight S.S."/>
            <person name="Hitz B.C."/>
            <person name="Karra K."/>
            <person name="Nash R.S."/>
            <person name="Weng S."/>
            <person name="Wong E.D."/>
            <person name="Lloyd P."/>
            <person name="Skrzypek M.S."/>
            <person name="Miyasato S.R."/>
            <person name="Simison M."/>
            <person name="Cherry J.M."/>
        </authorList>
    </citation>
    <scope>GENOME REANNOTATION</scope>
    <source>
        <strain>ATCC 204508 / S288c</strain>
    </source>
</reference>
<reference key="3">
    <citation type="submission" date="2003-09" db="EMBL/GenBank/DDBJ databases">
        <title>Verification of 3' and 5' ends of S.cerevisiae transcripts.</title>
        <authorList>
            <person name="Kennedy M.C."/>
            <person name="Dietrich F.S."/>
        </authorList>
    </citation>
    <scope>NUCLEOTIDE SEQUENCE [MRNA] OF 1-72 AND 478-501</scope>
    <source>
        <strain>ATCC 204511 / S288c / AB972</strain>
    </source>
</reference>
<reference key="4">
    <citation type="journal article" date="1996" name="Nucleic Acids Res.">
        <title>18S rRNA processing requires the RNA helicase-like protein Rrp3.</title>
        <authorList>
            <person name="O'Day C.L."/>
            <person name="Chavanikamannil F."/>
            <person name="Abelson J."/>
        </authorList>
    </citation>
    <scope>FUNCTION</scope>
    <scope>CATALYTIC ACTIVITY</scope>
    <scope>DISRUPTION PHENOTYPE</scope>
</reference>
<reference key="5">
    <citation type="journal article" date="2003" name="Nature">
        <title>Sequencing and comparison of yeast species to identify genes and regulatory elements.</title>
        <authorList>
            <person name="Kellis M."/>
            <person name="Patterson N."/>
            <person name="Endrizzi M."/>
            <person name="Birren B.W."/>
            <person name="Lander E.S."/>
        </authorList>
    </citation>
    <scope>IDENTIFICATION OF PROBABLE INITIATION SITE</scope>
</reference>
<reference key="6">
    <citation type="journal article" date="2006" name="Mol. Cell. Biol.">
        <title>Comprehensive mutational analysis of yeast DEXD/H box RNA helicases required for small ribosomal subunit synthesis.</title>
        <authorList>
            <person name="Granneman S."/>
            <person name="Bernstein K.A."/>
            <person name="Bleichert F."/>
            <person name="Baserga S.J."/>
        </authorList>
    </citation>
    <scope>INTERACTION WITH THE SSU PROCESSOME</scope>
    <scope>FUNCTION</scope>
    <scope>MUTAGENESIS OF LYS-131; ASP-231 AND SER-263</scope>
</reference>
<reference key="7">
    <citation type="journal article" date="2007" name="J. Proteome Res.">
        <title>Large-scale phosphorylation analysis of alpha-factor-arrested Saccharomyces cerevisiae.</title>
        <authorList>
            <person name="Li X."/>
            <person name="Gerber S.A."/>
            <person name="Rudner A.D."/>
            <person name="Beausoleil S.A."/>
            <person name="Haas W."/>
            <person name="Villen J."/>
            <person name="Elias J.E."/>
            <person name="Gygi S.P."/>
        </authorList>
    </citation>
    <scope>PHOSPHORYLATION [LARGE SCALE ANALYSIS] AT SER-43; SER-45 AND SER-47</scope>
    <scope>IDENTIFICATION BY MASS SPECTROMETRY [LARGE SCALE ANALYSIS]</scope>
    <source>
        <strain>ADR376</strain>
    </source>
</reference>
<reference key="8">
    <citation type="journal article" date="2008" name="Biochemistry">
        <title>Differential RNA-dependent ATPase activities of four rRNA processing yeast DEAD-box proteins.</title>
        <authorList>
            <person name="Garcia I."/>
            <person name="Uhlenbeck O.C."/>
        </authorList>
    </citation>
    <scope>FUNCTION</scope>
    <scope>CATALYTIC ACTIVITY</scope>
    <scope>BIOPHYSICOCHEMICAL PROPERTIES</scope>
    <scope>ACTIVITY REGULATION</scope>
    <scope>RNA-BINDING</scope>
</reference>
<reference key="9">
    <citation type="journal article" date="2008" name="Mol. Cell. Proteomics">
        <title>A multidimensional chromatography technology for in-depth phosphoproteome analysis.</title>
        <authorList>
            <person name="Albuquerque C.P."/>
            <person name="Smolka M.B."/>
            <person name="Payne S.H."/>
            <person name="Bafna V."/>
            <person name="Eng J."/>
            <person name="Zhou H."/>
        </authorList>
    </citation>
    <scope>IDENTIFICATION BY MASS SPECTROMETRY [LARGE SCALE ANALYSIS]</scope>
</reference>
<reference key="10">
    <citation type="journal article" date="2009" name="Science">
        <title>Global analysis of Cdk1 substrate phosphorylation sites provides insights into evolution.</title>
        <authorList>
            <person name="Holt L.J."/>
            <person name="Tuch B.B."/>
            <person name="Villen J."/>
            <person name="Johnson A.D."/>
            <person name="Gygi S.P."/>
            <person name="Morgan D.O."/>
        </authorList>
    </citation>
    <scope>PHOSPHORYLATION [LARGE SCALE ANALYSIS] AT SER-43; SER-45 AND SER-47</scope>
    <scope>IDENTIFICATION BY MASS SPECTROMETRY [LARGE SCALE ANALYSIS]</scope>
</reference>
<reference key="11">
    <citation type="journal article" date="2012" name="Biochemistry">
        <title>Duplex destabilization by four ribosomal DEAD-box proteins.</title>
        <authorList>
            <person name="Garcia I."/>
            <person name="Albring M.J."/>
            <person name="Uhlenbeck O.C."/>
        </authorList>
    </citation>
    <scope>FUNCTION</scope>
    <scope>CATALYTIC ACTIVITY</scope>
    <scope>ACTIVITY REGULATION</scope>
    <scope>RNA-BINDING</scope>
</reference>
<evidence type="ECO:0000255" key="1"/>
<evidence type="ECO:0000255" key="2">
    <source>
        <dbReference type="PROSITE-ProRule" id="PRU00541"/>
    </source>
</evidence>
<evidence type="ECO:0000255" key="3">
    <source>
        <dbReference type="PROSITE-ProRule" id="PRU00542"/>
    </source>
</evidence>
<evidence type="ECO:0000256" key="4">
    <source>
        <dbReference type="SAM" id="MobiDB-lite"/>
    </source>
</evidence>
<evidence type="ECO:0000269" key="5">
    <source>
    </source>
</evidence>
<evidence type="ECO:0000269" key="6">
    <source>
    </source>
</evidence>
<evidence type="ECO:0000269" key="7">
    <source>
    </source>
</evidence>
<evidence type="ECO:0000269" key="8">
    <source>
    </source>
</evidence>
<evidence type="ECO:0000303" key="9">
    <source>
    </source>
</evidence>
<evidence type="ECO:0000305" key="10"/>
<evidence type="ECO:0000312" key="11">
    <source>
        <dbReference type="SGD" id="S000001107"/>
    </source>
</evidence>
<evidence type="ECO:0007744" key="12">
    <source>
    </source>
</evidence>
<evidence type="ECO:0007744" key="13">
    <source>
    </source>
</evidence>
<protein>
    <recommendedName>
        <fullName evidence="10">ATP-dependent rRNA helicase RRP3</fullName>
        <ecNumber evidence="6 7 8">3.6.4.13</ecNumber>
    </recommendedName>
    <alternativeName>
        <fullName evidence="9">Ribosomal RNA-processing protein 3</fullName>
    </alternativeName>
</protein>
<accession>P38712</accession>
<accession>D3DL14</accession>
<accession>Q6TQT5</accession>
<accession>Q6TQT6</accession>
<gene>
    <name evidence="9" type="primary">RRP3</name>
    <name evidence="11" type="ordered locus">YHR065C</name>
</gene>